<sequence length="173" mass="19320">MPDATLSNTSLGRLAWLWLTVLIVAVDQVSKYYFENALSLYQQIIVIPDYFSWTLAYNTGAAFSFLADGAGWQRWLFALIAVVVSAVLVVWLKRLGRDDTWLAIALALVLGGALGNLYDRVVLGHVIDFILVHWQNRWYFPAFNVADSAITVGAIMLALDMFKSKKTGETVND</sequence>
<organism>
    <name type="scientific">Pseudomonas syringae pv. tomato (strain ATCC BAA-871 / DC3000)</name>
    <dbReference type="NCBI Taxonomy" id="223283"/>
    <lineage>
        <taxon>Bacteria</taxon>
        <taxon>Pseudomonadati</taxon>
        <taxon>Pseudomonadota</taxon>
        <taxon>Gammaproteobacteria</taxon>
        <taxon>Pseudomonadales</taxon>
        <taxon>Pseudomonadaceae</taxon>
        <taxon>Pseudomonas</taxon>
    </lineage>
</organism>
<keyword id="KW-0064">Aspartyl protease</keyword>
<keyword id="KW-0997">Cell inner membrane</keyword>
<keyword id="KW-1003">Cell membrane</keyword>
<keyword id="KW-0378">Hydrolase</keyword>
<keyword id="KW-0472">Membrane</keyword>
<keyword id="KW-0645">Protease</keyword>
<keyword id="KW-1185">Reference proteome</keyword>
<keyword id="KW-0812">Transmembrane</keyword>
<keyword id="KW-1133">Transmembrane helix</keyword>
<name>LSPA_PSESM</name>
<reference key="1">
    <citation type="journal article" date="2003" name="Proc. Natl. Acad. Sci. U.S.A.">
        <title>The complete genome sequence of the Arabidopsis and tomato pathogen Pseudomonas syringae pv. tomato DC3000.</title>
        <authorList>
            <person name="Buell C.R."/>
            <person name="Joardar V."/>
            <person name="Lindeberg M."/>
            <person name="Selengut J."/>
            <person name="Paulsen I.T."/>
            <person name="Gwinn M.L."/>
            <person name="Dodson R.J."/>
            <person name="DeBoy R.T."/>
            <person name="Durkin A.S."/>
            <person name="Kolonay J.F."/>
            <person name="Madupu R."/>
            <person name="Daugherty S.C."/>
            <person name="Brinkac L.M."/>
            <person name="Beanan M.J."/>
            <person name="Haft D.H."/>
            <person name="Nelson W.C."/>
            <person name="Davidsen T.M."/>
            <person name="Zafar N."/>
            <person name="Zhou L."/>
            <person name="Liu J."/>
            <person name="Yuan Q."/>
            <person name="Khouri H.M."/>
            <person name="Fedorova N.B."/>
            <person name="Tran B."/>
            <person name="Russell D."/>
            <person name="Berry K.J."/>
            <person name="Utterback T.R."/>
            <person name="Van Aken S.E."/>
            <person name="Feldblyum T.V."/>
            <person name="D'Ascenzo M."/>
            <person name="Deng W.-L."/>
            <person name="Ramos A.R."/>
            <person name="Alfano J.R."/>
            <person name="Cartinhour S."/>
            <person name="Chatterjee A.K."/>
            <person name="Delaney T.P."/>
            <person name="Lazarowitz S.G."/>
            <person name="Martin G.B."/>
            <person name="Schneider D.J."/>
            <person name="Tang X."/>
            <person name="Bender C.L."/>
            <person name="White O."/>
            <person name="Fraser C.M."/>
            <person name="Collmer A."/>
        </authorList>
    </citation>
    <scope>NUCLEOTIDE SEQUENCE [LARGE SCALE GENOMIC DNA]</scope>
    <source>
        <strain>ATCC BAA-871 / DC3000</strain>
    </source>
</reference>
<accession>Q889E3</accession>
<gene>
    <name evidence="1" type="primary">lspA</name>
    <name type="ordered locus">PSPTO_0807</name>
</gene>
<proteinExistence type="inferred from homology"/>
<comment type="function">
    <text evidence="1">This protein specifically catalyzes the removal of signal peptides from prolipoproteins.</text>
</comment>
<comment type="catalytic activity">
    <reaction evidence="1">
        <text>Release of signal peptides from bacterial membrane prolipoproteins. Hydrolyzes -Xaa-Yaa-Zaa-|-(S,diacylglyceryl)Cys-, in which Xaa is hydrophobic (preferably Leu), and Yaa (Ala or Ser) and Zaa (Gly or Ala) have small, neutral side chains.</text>
        <dbReference type="EC" id="3.4.23.36"/>
    </reaction>
</comment>
<comment type="pathway">
    <text evidence="1">Protein modification; lipoprotein biosynthesis (signal peptide cleavage).</text>
</comment>
<comment type="subcellular location">
    <subcellularLocation>
        <location evidence="1">Cell inner membrane</location>
        <topology evidence="1">Multi-pass membrane protein</topology>
    </subcellularLocation>
</comment>
<comment type="similarity">
    <text evidence="1">Belongs to the peptidase A8 family.</text>
</comment>
<evidence type="ECO:0000255" key="1">
    <source>
        <dbReference type="HAMAP-Rule" id="MF_00161"/>
    </source>
</evidence>
<dbReference type="EC" id="3.4.23.36" evidence="1"/>
<dbReference type="EMBL" id="AE016853">
    <property type="protein sequence ID" value="AAO54349.1"/>
    <property type="molecule type" value="Genomic_DNA"/>
</dbReference>
<dbReference type="RefSeq" id="NP_790654.1">
    <property type="nucleotide sequence ID" value="NC_004578.1"/>
</dbReference>
<dbReference type="RefSeq" id="WP_005769261.1">
    <property type="nucleotide sequence ID" value="NC_004578.1"/>
</dbReference>
<dbReference type="SMR" id="Q889E3"/>
<dbReference type="STRING" id="223283.PSPTO_0807"/>
<dbReference type="GeneID" id="1182432"/>
<dbReference type="KEGG" id="pst:PSPTO_0807"/>
<dbReference type="PATRIC" id="fig|223283.9.peg.820"/>
<dbReference type="eggNOG" id="COG0597">
    <property type="taxonomic scope" value="Bacteria"/>
</dbReference>
<dbReference type="HOGENOM" id="CLU_083252_4_0_6"/>
<dbReference type="OrthoDB" id="9810259at2"/>
<dbReference type="PhylomeDB" id="Q889E3"/>
<dbReference type="UniPathway" id="UPA00665"/>
<dbReference type="Proteomes" id="UP000002515">
    <property type="component" value="Chromosome"/>
</dbReference>
<dbReference type="GO" id="GO:0005886">
    <property type="term" value="C:plasma membrane"/>
    <property type="evidence" value="ECO:0007669"/>
    <property type="project" value="UniProtKB-SubCell"/>
</dbReference>
<dbReference type="GO" id="GO:0004190">
    <property type="term" value="F:aspartic-type endopeptidase activity"/>
    <property type="evidence" value="ECO:0007669"/>
    <property type="project" value="UniProtKB-UniRule"/>
</dbReference>
<dbReference type="GO" id="GO:0006508">
    <property type="term" value="P:proteolysis"/>
    <property type="evidence" value="ECO:0007669"/>
    <property type="project" value="UniProtKB-KW"/>
</dbReference>
<dbReference type="HAMAP" id="MF_00161">
    <property type="entry name" value="LspA"/>
    <property type="match status" value="1"/>
</dbReference>
<dbReference type="InterPro" id="IPR001872">
    <property type="entry name" value="Peptidase_A8"/>
</dbReference>
<dbReference type="NCBIfam" id="TIGR00077">
    <property type="entry name" value="lspA"/>
    <property type="match status" value="1"/>
</dbReference>
<dbReference type="PANTHER" id="PTHR33695">
    <property type="entry name" value="LIPOPROTEIN SIGNAL PEPTIDASE"/>
    <property type="match status" value="1"/>
</dbReference>
<dbReference type="PANTHER" id="PTHR33695:SF1">
    <property type="entry name" value="LIPOPROTEIN SIGNAL PEPTIDASE"/>
    <property type="match status" value="1"/>
</dbReference>
<dbReference type="Pfam" id="PF01252">
    <property type="entry name" value="Peptidase_A8"/>
    <property type="match status" value="1"/>
</dbReference>
<dbReference type="PRINTS" id="PR00781">
    <property type="entry name" value="LIPOSIGPTASE"/>
</dbReference>
<dbReference type="PROSITE" id="PS00855">
    <property type="entry name" value="SPASE_II"/>
    <property type="match status" value="1"/>
</dbReference>
<feature type="chain" id="PRO_0000178805" description="Lipoprotein signal peptidase">
    <location>
        <begin position="1"/>
        <end position="173"/>
    </location>
</feature>
<feature type="transmembrane region" description="Helical" evidence="1">
    <location>
        <begin position="14"/>
        <end position="34"/>
    </location>
</feature>
<feature type="transmembrane region" description="Helical" evidence="1">
    <location>
        <begin position="44"/>
        <end position="64"/>
    </location>
</feature>
<feature type="transmembrane region" description="Helical" evidence="1">
    <location>
        <begin position="72"/>
        <end position="92"/>
    </location>
</feature>
<feature type="transmembrane region" description="Helical" evidence="1">
    <location>
        <begin position="98"/>
        <end position="118"/>
    </location>
</feature>
<feature type="transmembrane region" description="Helical" evidence="1">
    <location>
        <begin position="139"/>
        <end position="159"/>
    </location>
</feature>
<feature type="active site" evidence="1">
    <location>
        <position position="128"/>
    </location>
</feature>
<feature type="active site" evidence="1">
    <location>
        <position position="147"/>
    </location>
</feature>
<protein>
    <recommendedName>
        <fullName evidence="1">Lipoprotein signal peptidase</fullName>
        <ecNumber evidence="1">3.4.23.36</ecNumber>
    </recommendedName>
    <alternativeName>
        <fullName evidence="1">Prolipoprotein signal peptidase</fullName>
    </alternativeName>
    <alternativeName>
        <fullName evidence="1">Signal peptidase II</fullName>
        <shortName evidence="1">SPase II</shortName>
    </alternativeName>
</protein>